<name>Y115_STAEQ</name>
<evidence type="ECO:0000255" key="1">
    <source>
        <dbReference type="HAMAP-Rule" id="MF_00274"/>
    </source>
</evidence>
<evidence type="ECO:0000256" key="2">
    <source>
        <dbReference type="SAM" id="MobiDB-lite"/>
    </source>
</evidence>
<comment type="function">
    <text evidence="1">Binds to DNA and alters its conformation. May be involved in regulation of gene expression, nucleoid organization and DNA protection.</text>
</comment>
<comment type="subunit">
    <text evidence="1">Homodimer.</text>
</comment>
<comment type="subcellular location">
    <subcellularLocation>
        <location evidence="1">Cytoplasm</location>
        <location evidence="1">Nucleoid</location>
    </subcellularLocation>
</comment>
<comment type="similarity">
    <text evidence="1">Belongs to the YbaB/EbfC family.</text>
</comment>
<reference key="1">
    <citation type="journal article" date="2005" name="J. Bacteriol.">
        <title>Insights on evolution of virulence and resistance from the complete genome analysis of an early methicillin-resistant Staphylococcus aureus strain and a biofilm-producing methicillin-resistant Staphylococcus epidermidis strain.</title>
        <authorList>
            <person name="Gill S.R."/>
            <person name="Fouts D.E."/>
            <person name="Archer G.L."/>
            <person name="Mongodin E.F."/>
            <person name="DeBoy R.T."/>
            <person name="Ravel J."/>
            <person name="Paulsen I.T."/>
            <person name="Kolonay J.F."/>
            <person name="Brinkac L.M."/>
            <person name="Beanan M.J."/>
            <person name="Dodson R.J."/>
            <person name="Daugherty S.C."/>
            <person name="Madupu R."/>
            <person name="Angiuoli S.V."/>
            <person name="Durkin A.S."/>
            <person name="Haft D.H."/>
            <person name="Vamathevan J.J."/>
            <person name="Khouri H."/>
            <person name="Utterback T.R."/>
            <person name="Lee C."/>
            <person name="Dimitrov G."/>
            <person name="Jiang L."/>
            <person name="Qin H."/>
            <person name="Weidman J."/>
            <person name="Tran K."/>
            <person name="Kang K.H."/>
            <person name="Hance I.R."/>
            <person name="Nelson K.E."/>
            <person name="Fraser C.M."/>
        </authorList>
    </citation>
    <scope>NUCLEOTIDE SEQUENCE [LARGE SCALE GENOMIC DNA]</scope>
    <source>
        <strain>ATCC 35984 / DSM 28319 / BCRC 17069 / CCUG 31568 / BM 3577 / RP62A</strain>
    </source>
</reference>
<sequence>MRGGGNMQQMMKQMQKMQKKMAQEQEKLKEERVAGTAGGGMVTVTVTGHKEVVDVEIKEEAVDPEDIEMLQDLVLAATNEAMNKADELTQQRLGKHTQGLNIPGM</sequence>
<gene>
    <name type="ordered locus">SERP0115</name>
</gene>
<dbReference type="EMBL" id="CP000029">
    <property type="protein sequence ID" value="AAW53557.1"/>
    <property type="molecule type" value="Genomic_DNA"/>
</dbReference>
<dbReference type="RefSeq" id="WP_001829343.1">
    <property type="nucleotide sequence ID" value="NC_002976.3"/>
</dbReference>
<dbReference type="SMR" id="Q5HRS8"/>
<dbReference type="STRING" id="176279.SERP0115"/>
<dbReference type="KEGG" id="ser:SERP0115"/>
<dbReference type="eggNOG" id="COG0718">
    <property type="taxonomic scope" value="Bacteria"/>
</dbReference>
<dbReference type="HOGENOM" id="CLU_140930_1_0_9"/>
<dbReference type="Proteomes" id="UP000000531">
    <property type="component" value="Chromosome"/>
</dbReference>
<dbReference type="GO" id="GO:0043590">
    <property type="term" value="C:bacterial nucleoid"/>
    <property type="evidence" value="ECO:0007669"/>
    <property type="project" value="UniProtKB-UniRule"/>
</dbReference>
<dbReference type="GO" id="GO:0005829">
    <property type="term" value="C:cytosol"/>
    <property type="evidence" value="ECO:0007669"/>
    <property type="project" value="TreeGrafter"/>
</dbReference>
<dbReference type="GO" id="GO:0003677">
    <property type="term" value="F:DNA binding"/>
    <property type="evidence" value="ECO:0007669"/>
    <property type="project" value="UniProtKB-UniRule"/>
</dbReference>
<dbReference type="FunFam" id="3.30.1310.10:FF:000002">
    <property type="entry name" value="Nucleoid-associated protein IKC_06587"/>
    <property type="match status" value="1"/>
</dbReference>
<dbReference type="Gene3D" id="3.30.1310.10">
    <property type="entry name" value="Nucleoid-associated protein YbaB-like domain"/>
    <property type="match status" value="1"/>
</dbReference>
<dbReference type="HAMAP" id="MF_00274">
    <property type="entry name" value="DNA_YbaB_EbfC"/>
    <property type="match status" value="1"/>
</dbReference>
<dbReference type="InterPro" id="IPR036894">
    <property type="entry name" value="YbaB-like_sf"/>
</dbReference>
<dbReference type="InterPro" id="IPR004401">
    <property type="entry name" value="YbaB/EbfC"/>
</dbReference>
<dbReference type="NCBIfam" id="TIGR00103">
    <property type="entry name" value="DNA_YbaB_EbfC"/>
    <property type="match status" value="1"/>
</dbReference>
<dbReference type="PANTHER" id="PTHR33449">
    <property type="entry name" value="NUCLEOID-ASSOCIATED PROTEIN YBAB"/>
    <property type="match status" value="1"/>
</dbReference>
<dbReference type="PANTHER" id="PTHR33449:SF1">
    <property type="entry name" value="NUCLEOID-ASSOCIATED PROTEIN YBAB"/>
    <property type="match status" value="1"/>
</dbReference>
<dbReference type="Pfam" id="PF02575">
    <property type="entry name" value="YbaB_DNA_bd"/>
    <property type="match status" value="1"/>
</dbReference>
<dbReference type="PIRSF" id="PIRSF004555">
    <property type="entry name" value="UCP004555"/>
    <property type="match status" value="1"/>
</dbReference>
<dbReference type="SUPFAM" id="SSF82607">
    <property type="entry name" value="YbaB-like"/>
    <property type="match status" value="1"/>
</dbReference>
<protein>
    <recommendedName>
        <fullName evidence="1">Nucleoid-associated protein SERP0115</fullName>
    </recommendedName>
</protein>
<feature type="chain" id="PRO_0000170442" description="Nucleoid-associated protein SERP0115">
    <location>
        <begin position="1"/>
        <end position="105"/>
    </location>
</feature>
<feature type="region of interest" description="Disordered" evidence="2">
    <location>
        <begin position="1"/>
        <end position="40"/>
    </location>
</feature>
<feature type="compositionally biased region" description="Low complexity" evidence="2">
    <location>
        <begin position="7"/>
        <end position="16"/>
    </location>
</feature>
<feature type="compositionally biased region" description="Basic and acidic residues" evidence="2">
    <location>
        <begin position="21"/>
        <end position="33"/>
    </location>
</feature>
<organism>
    <name type="scientific">Staphylococcus epidermidis (strain ATCC 35984 / DSM 28319 / BCRC 17069 / CCUG 31568 / BM 3577 / RP62A)</name>
    <dbReference type="NCBI Taxonomy" id="176279"/>
    <lineage>
        <taxon>Bacteria</taxon>
        <taxon>Bacillati</taxon>
        <taxon>Bacillota</taxon>
        <taxon>Bacilli</taxon>
        <taxon>Bacillales</taxon>
        <taxon>Staphylococcaceae</taxon>
        <taxon>Staphylococcus</taxon>
    </lineage>
</organism>
<proteinExistence type="inferred from homology"/>
<keyword id="KW-0963">Cytoplasm</keyword>
<keyword id="KW-0238">DNA-binding</keyword>
<keyword id="KW-1185">Reference proteome</keyword>
<accession>Q5HRS8</accession>